<keyword id="KW-0963">Cytoplasm</keyword>
<keyword id="KW-0251">Elongation factor</keyword>
<keyword id="KW-0379">Hydroxylation</keyword>
<keyword id="KW-0648">Protein biosynthesis</keyword>
<keyword id="KW-1185">Reference proteome</keyword>
<proteinExistence type="inferred from homology"/>
<protein>
    <recommendedName>
        <fullName evidence="1">Elongation factor P</fullName>
        <shortName evidence="1">EF-P</shortName>
    </recommendedName>
</protein>
<reference key="1">
    <citation type="journal article" date="2004" name="Proc. Natl. Acad. Sci. U.S.A.">
        <title>Genome sequence of the enterobacterial phytopathogen Erwinia carotovora subsp. atroseptica and characterization of virulence factors.</title>
        <authorList>
            <person name="Bell K.S."/>
            <person name="Sebaihia M."/>
            <person name="Pritchard L."/>
            <person name="Holden M.T.G."/>
            <person name="Hyman L.J."/>
            <person name="Holeva M.C."/>
            <person name="Thomson N.R."/>
            <person name="Bentley S.D."/>
            <person name="Churcher L.J.C."/>
            <person name="Mungall K."/>
            <person name="Atkin R."/>
            <person name="Bason N."/>
            <person name="Brooks K."/>
            <person name="Chillingworth T."/>
            <person name="Clark K."/>
            <person name="Doggett J."/>
            <person name="Fraser A."/>
            <person name="Hance Z."/>
            <person name="Hauser H."/>
            <person name="Jagels K."/>
            <person name="Moule S."/>
            <person name="Norbertczak H."/>
            <person name="Ormond D."/>
            <person name="Price C."/>
            <person name="Quail M.A."/>
            <person name="Sanders M."/>
            <person name="Walker D."/>
            <person name="Whitehead S."/>
            <person name="Salmond G.P.C."/>
            <person name="Birch P.R.J."/>
            <person name="Parkhill J."/>
            <person name="Toth I.K."/>
        </authorList>
    </citation>
    <scope>NUCLEOTIDE SEQUENCE [LARGE SCALE GENOMIC DNA]</scope>
    <source>
        <strain>SCRI 1043 / ATCC BAA-672</strain>
    </source>
</reference>
<feature type="chain" id="PRO_0000094249" description="Elongation factor P">
    <location>
        <begin position="1"/>
        <end position="188"/>
    </location>
</feature>
<feature type="modified residue" description="N6-(3,6-diaminohexanoyl)-5-hydroxylysine" evidence="1">
    <location>
        <position position="34"/>
    </location>
</feature>
<sequence>MATYSSNDFRSGLKIIFESEPYAIESSEFVKPGKGQAFARVKMRRLLTGSRVEKTFKSTDSLEGADVVDTNMNYLYNDGEFYHFMHPETFEQHQVEEKTVGDSAKWLQDNAECIVTLWDGRPITVLPPNFIEAEITDTDPGLKGDTAGTGGKPATLSTGAVVKVPLFVQIGEVVRVDTRSGEYVSRVK</sequence>
<dbReference type="EMBL" id="BX950851">
    <property type="protein sequence ID" value="CAG76873.1"/>
    <property type="molecule type" value="Genomic_DNA"/>
</dbReference>
<dbReference type="RefSeq" id="WP_011095470.1">
    <property type="nucleotide sequence ID" value="NC_004547.2"/>
</dbReference>
<dbReference type="SMR" id="Q6D025"/>
<dbReference type="STRING" id="218491.ECA3976"/>
<dbReference type="GeneID" id="57210589"/>
<dbReference type="KEGG" id="eca:ECA3976"/>
<dbReference type="PATRIC" id="fig|218491.5.peg.4041"/>
<dbReference type="eggNOG" id="COG0231">
    <property type="taxonomic scope" value="Bacteria"/>
</dbReference>
<dbReference type="HOGENOM" id="CLU_074944_0_0_6"/>
<dbReference type="OrthoDB" id="9801844at2"/>
<dbReference type="UniPathway" id="UPA00345"/>
<dbReference type="Proteomes" id="UP000007966">
    <property type="component" value="Chromosome"/>
</dbReference>
<dbReference type="GO" id="GO:0005737">
    <property type="term" value="C:cytoplasm"/>
    <property type="evidence" value="ECO:0007669"/>
    <property type="project" value="UniProtKB-SubCell"/>
</dbReference>
<dbReference type="GO" id="GO:0003746">
    <property type="term" value="F:translation elongation factor activity"/>
    <property type="evidence" value="ECO:0007669"/>
    <property type="project" value="UniProtKB-UniRule"/>
</dbReference>
<dbReference type="GO" id="GO:0043043">
    <property type="term" value="P:peptide biosynthetic process"/>
    <property type="evidence" value="ECO:0007669"/>
    <property type="project" value="InterPro"/>
</dbReference>
<dbReference type="CDD" id="cd04470">
    <property type="entry name" value="S1_EF-P_repeat_1"/>
    <property type="match status" value="1"/>
</dbReference>
<dbReference type="CDD" id="cd05794">
    <property type="entry name" value="S1_EF-P_repeat_2"/>
    <property type="match status" value="1"/>
</dbReference>
<dbReference type="FunFam" id="2.30.30.30:FF:000003">
    <property type="entry name" value="Elongation factor P"/>
    <property type="match status" value="1"/>
</dbReference>
<dbReference type="FunFam" id="2.40.50.140:FF:000004">
    <property type="entry name" value="Elongation factor P"/>
    <property type="match status" value="1"/>
</dbReference>
<dbReference type="FunFam" id="2.40.50.140:FF:000009">
    <property type="entry name" value="Elongation factor P"/>
    <property type="match status" value="1"/>
</dbReference>
<dbReference type="Gene3D" id="2.30.30.30">
    <property type="match status" value="1"/>
</dbReference>
<dbReference type="Gene3D" id="2.40.50.140">
    <property type="entry name" value="Nucleic acid-binding proteins"/>
    <property type="match status" value="2"/>
</dbReference>
<dbReference type="HAMAP" id="MF_00141">
    <property type="entry name" value="EF_P"/>
    <property type="match status" value="1"/>
</dbReference>
<dbReference type="InterPro" id="IPR015365">
    <property type="entry name" value="Elong-fact-P_C"/>
</dbReference>
<dbReference type="InterPro" id="IPR012340">
    <property type="entry name" value="NA-bd_OB-fold"/>
</dbReference>
<dbReference type="InterPro" id="IPR014722">
    <property type="entry name" value="Rib_uL2_dom2"/>
</dbReference>
<dbReference type="InterPro" id="IPR020599">
    <property type="entry name" value="Transl_elong_fac_P/YeiP"/>
</dbReference>
<dbReference type="InterPro" id="IPR013185">
    <property type="entry name" value="Transl_elong_KOW-like"/>
</dbReference>
<dbReference type="InterPro" id="IPR001059">
    <property type="entry name" value="Transl_elong_P/YeiP_cen"/>
</dbReference>
<dbReference type="InterPro" id="IPR013852">
    <property type="entry name" value="Transl_elong_P/YeiP_CS"/>
</dbReference>
<dbReference type="InterPro" id="IPR011768">
    <property type="entry name" value="Transl_elongation_fac_P"/>
</dbReference>
<dbReference type="InterPro" id="IPR008991">
    <property type="entry name" value="Translation_prot_SH3-like_sf"/>
</dbReference>
<dbReference type="NCBIfam" id="TIGR00038">
    <property type="entry name" value="efp"/>
    <property type="match status" value="1"/>
</dbReference>
<dbReference type="NCBIfam" id="NF001810">
    <property type="entry name" value="PRK00529.1"/>
    <property type="match status" value="1"/>
</dbReference>
<dbReference type="PANTHER" id="PTHR30053">
    <property type="entry name" value="ELONGATION FACTOR P"/>
    <property type="match status" value="1"/>
</dbReference>
<dbReference type="PANTHER" id="PTHR30053:SF12">
    <property type="entry name" value="ELONGATION FACTOR P (EF-P) FAMILY PROTEIN"/>
    <property type="match status" value="1"/>
</dbReference>
<dbReference type="Pfam" id="PF01132">
    <property type="entry name" value="EFP"/>
    <property type="match status" value="1"/>
</dbReference>
<dbReference type="Pfam" id="PF08207">
    <property type="entry name" value="EFP_N"/>
    <property type="match status" value="1"/>
</dbReference>
<dbReference type="Pfam" id="PF09285">
    <property type="entry name" value="Elong-fact-P_C"/>
    <property type="match status" value="1"/>
</dbReference>
<dbReference type="PIRSF" id="PIRSF005901">
    <property type="entry name" value="EF-P"/>
    <property type="match status" value="1"/>
</dbReference>
<dbReference type="SMART" id="SM01185">
    <property type="entry name" value="EFP"/>
    <property type="match status" value="1"/>
</dbReference>
<dbReference type="SMART" id="SM00841">
    <property type="entry name" value="Elong-fact-P_C"/>
    <property type="match status" value="1"/>
</dbReference>
<dbReference type="SUPFAM" id="SSF50249">
    <property type="entry name" value="Nucleic acid-binding proteins"/>
    <property type="match status" value="2"/>
</dbReference>
<dbReference type="SUPFAM" id="SSF50104">
    <property type="entry name" value="Translation proteins SH3-like domain"/>
    <property type="match status" value="1"/>
</dbReference>
<dbReference type="PROSITE" id="PS01275">
    <property type="entry name" value="EFP"/>
    <property type="match status" value="1"/>
</dbReference>
<comment type="function">
    <text evidence="1">Involved in peptide bond synthesis. Alleviates ribosome stalling that occurs when 3 or more consecutive Pro residues or the sequence PPG is present in a protein, possibly by augmenting the peptidyl transferase activity of the ribosome. Modification of Lys-34 is required for alleviation.</text>
</comment>
<comment type="pathway">
    <text evidence="1">Protein biosynthesis; polypeptide chain elongation.</text>
</comment>
<comment type="subcellular location">
    <subcellularLocation>
        <location evidence="1">Cytoplasm</location>
    </subcellularLocation>
</comment>
<comment type="PTM">
    <text evidence="1">May be beta-lysylated on the epsilon-amino group of Lys-34 by the combined action of EpmA and EpmB, and then hydroxylated on the C5 position of the same residue by EpmC (if this protein is present). Lysylation is critical for the stimulatory effect of EF-P on peptide-bond formation. The lysylation moiety may extend toward the peptidyltransferase center and stabilize the terminal 3-CCA end of the tRNA. Hydroxylation of the C5 position on Lys-34 may allow additional potential stabilizing hydrogen-bond interactions with the P-tRNA.</text>
</comment>
<comment type="similarity">
    <text evidence="1">Belongs to the elongation factor P family.</text>
</comment>
<accession>Q6D025</accession>
<gene>
    <name evidence="1" type="primary">efp</name>
    <name type="ordered locus">ECA3976</name>
</gene>
<evidence type="ECO:0000255" key="1">
    <source>
        <dbReference type="HAMAP-Rule" id="MF_00141"/>
    </source>
</evidence>
<name>EFP_PECAS</name>
<organism>
    <name type="scientific">Pectobacterium atrosepticum (strain SCRI 1043 / ATCC BAA-672)</name>
    <name type="common">Erwinia carotovora subsp. atroseptica</name>
    <dbReference type="NCBI Taxonomy" id="218491"/>
    <lineage>
        <taxon>Bacteria</taxon>
        <taxon>Pseudomonadati</taxon>
        <taxon>Pseudomonadota</taxon>
        <taxon>Gammaproteobacteria</taxon>
        <taxon>Enterobacterales</taxon>
        <taxon>Pectobacteriaceae</taxon>
        <taxon>Pectobacterium</taxon>
    </lineage>
</organism>